<feature type="chain" id="PRO_0000309918" description="Large ribosomal subunit protein uL2">
    <location>
        <begin position="1"/>
        <end position="274"/>
    </location>
</feature>
<feature type="region of interest" description="Disordered" evidence="2">
    <location>
        <begin position="224"/>
        <end position="274"/>
    </location>
</feature>
<feature type="compositionally biased region" description="Basic residues" evidence="2">
    <location>
        <begin position="257"/>
        <end position="274"/>
    </location>
</feature>
<protein>
    <recommendedName>
        <fullName evidence="1">Large ribosomal subunit protein uL2</fullName>
    </recommendedName>
    <alternativeName>
        <fullName evidence="3">50S ribosomal protein L2</fullName>
    </alternativeName>
</protein>
<sequence length="274" mass="30401">MIEIKKAKPTSPGRRHVVSVKNTELHTGKPFKGLVEVKKSKAGRNNTGRITVRHQGGGHKQHYRIVDFKRNKDDITAKVERIEYDPNRSANIALVLYADGERRYIVAPKGLKKDMSVISGEKVDIAVGNCMPLRNIPLGTVIHNIEMKPKKGAQMIRSAGTFAQLVGKDNAYAIIRLRSGEMRRVLLDCRAVIGVVSNSEHNLKSLGKAGAKRWRGIRPTVRGVAMNPVDHPHGGGEGRTSGGRHPVTPWGIPTKGYKTRRNKRSNKLIVQKRK</sequence>
<evidence type="ECO:0000255" key="1">
    <source>
        <dbReference type="HAMAP-Rule" id="MF_01320"/>
    </source>
</evidence>
<evidence type="ECO:0000256" key="2">
    <source>
        <dbReference type="SAM" id="MobiDB-lite"/>
    </source>
</evidence>
<evidence type="ECO:0000305" key="3"/>
<keyword id="KW-0687">Ribonucleoprotein</keyword>
<keyword id="KW-0689">Ribosomal protein</keyword>
<keyword id="KW-0694">RNA-binding</keyword>
<keyword id="KW-0699">rRNA-binding</keyword>
<organism>
    <name type="scientific">Francisella tularensis subsp. holarctica (strain OSU18)</name>
    <dbReference type="NCBI Taxonomy" id="393011"/>
    <lineage>
        <taxon>Bacteria</taxon>
        <taxon>Pseudomonadati</taxon>
        <taxon>Pseudomonadota</taxon>
        <taxon>Gammaproteobacteria</taxon>
        <taxon>Thiotrichales</taxon>
        <taxon>Francisellaceae</taxon>
        <taxon>Francisella</taxon>
    </lineage>
</organism>
<accession>Q0BNS4</accession>
<gene>
    <name evidence="1" type="primary">rplB</name>
    <name type="ordered locus">FTH_0234</name>
</gene>
<comment type="function">
    <text evidence="1">One of the primary rRNA binding proteins. Required for association of the 30S and 50S subunits to form the 70S ribosome, for tRNA binding and peptide bond formation. It has been suggested to have peptidyltransferase activity; this is somewhat controversial. Makes several contacts with the 16S rRNA in the 70S ribosome.</text>
</comment>
<comment type="subunit">
    <text evidence="1">Part of the 50S ribosomal subunit. Forms a bridge to the 30S subunit in the 70S ribosome.</text>
</comment>
<comment type="similarity">
    <text evidence="1">Belongs to the universal ribosomal protein uL2 family.</text>
</comment>
<dbReference type="EMBL" id="CP000437">
    <property type="protein sequence ID" value="ABI82260.1"/>
    <property type="molecule type" value="Genomic_DNA"/>
</dbReference>
<dbReference type="RefSeq" id="WP_011457354.1">
    <property type="nucleotide sequence ID" value="NC_017463.1"/>
</dbReference>
<dbReference type="SMR" id="Q0BNS4"/>
<dbReference type="KEGG" id="fth:FTH_0234"/>
<dbReference type="GO" id="GO:0015934">
    <property type="term" value="C:large ribosomal subunit"/>
    <property type="evidence" value="ECO:0007669"/>
    <property type="project" value="InterPro"/>
</dbReference>
<dbReference type="GO" id="GO:0019843">
    <property type="term" value="F:rRNA binding"/>
    <property type="evidence" value="ECO:0007669"/>
    <property type="project" value="UniProtKB-UniRule"/>
</dbReference>
<dbReference type="GO" id="GO:0003735">
    <property type="term" value="F:structural constituent of ribosome"/>
    <property type="evidence" value="ECO:0007669"/>
    <property type="project" value="InterPro"/>
</dbReference>
<dbReference type="GO" id="GO:0016740">
    <property type="term" value="F:transferase activity"/>
    <property type="evidence" value="ECO:0007669"/>
    <property type="project" value="InterPro"/>
</dbReference>
<dbReference type="GO" id="GO:0002181">
    <property type="term" value="P:cytoplasmic translation"/>
    <property type="evidence" value="ECO:0007669"/>
    <property type="project" value="TreeGrafter"/>
</dbReference>
<dbReference type="FunFam" id="2.30.30.30:FF:000001">
    <property type="entry name" value="50S ribosomal protein L2"/>
    <property type="match status" value="1"/>
</dbReference>
<dbReference type="FunFam" id="2.40.50.140:FF:000003">
    <property type="entry name" value="50S ribosomal protein L2"/>
    <property type="match status" value="1"/>
</dbReference>
<dbReference type="FunFam" id="4.10.950.10:FF:000001">
    <property type="entry name" value="50S ribosomal protein L2"/>
    <property type="match status" value="1"/>
</dbReference>
<dbReference type="Gene3D" id="2.30.30.30">
    <property type="match status" value="1"/>
</dbReference>
<dbReference type="Gene3D" id="2.40.50.140">
    <property type="entry name" value="Nucleic acid-binding proteins"/>
    <property type="match status" value="1"/>
</dbReference>
<dbReference type="Gene3D" id="4.10.950.10">
    <property type="entry name" value="Ribosomal protein L2, domain 3"/>
    <property type="match status" value="1"/>
</dbReference>
<dbReference type="HAMAP" id="MF_01320_B">
    <property type="entry name" value="Ribosomal_uL2_B"/>
    <property type="match status" value="1"/>
</dbReference>
<dbReference type="InterPro" id="IPR012340">
    <property type="entry name" value="NA-bd_OB-fold"/>
</dbReference>
<dbReference type="InterPro" id="IPR014722">
    <property type="entry name" value="Rib_uL2_dom2"/>
</dbReference>
<dbReference type="InterPro" id="IPR002171">
    <property type="entry name" value="Ribosomal_uL2"/>
</dbReference>
<dbReference type="InterPro" id="IPR005880">
    <property type="entry name" value="Ribosomal_uL2_bac/org-type"/>
</dbReference>
<dbReference type="InterPro" id="IPR022669">
    <property type="entry name" value="Ribosomal_uL2_C"/>
</dbReference>
<dbReference type="InterPro" id="IPR022671">
    <property type="entry name" value="Ribosomal_uL2_CS"/>
</dbReference>
<dbReference type="InterPro" id="IPR014726">
    <property type="entry name" value="Ribosomal_uL2_dom3"/>
</dbReference>
<dbReference type="InterPro" id="IPR022666">
    <property type="entry name" value="Ribosomal_uL2_RNA-bd_dom"/>
</dbReference>
<dbReference type="InterPro" id="IPR008991">
    <property type="entry name" value="Translation_prot_SH3-like_sf"/>
</dbReference>
<dbReference type="NCBIfam" id="TIGR01171">
    <property type="entry name" value="rplB_bact"/>
    <property type="match status" value="1"/>
</dbReference>
<dbReference type="PANTHER" id="PTHR13691:SF5">
    <property type="entry name" value="LARGE RIBOSOMAL SUBUNIT PROTEIN UL2M"/>
    <property type="match status" value="1"/>
</dbReference>
<dbReference type="PANTHER" id="PTHR13691">
    <property type="entry name" value="RIBOSOMAL PROTEIN L2"/>
    <property type="match status" value="1"/>
</dbReference>
<dbReference type="Pfam" id="PF00181">
    <property type="entry name" value="Ribosomal_L2"/>
    <property type="match status" value="1"/>
</dbReference>
<dbReference type="Pfam" id="PF03947">
    <property type="entry name" value="Ribosomal_L2_C"/>
    <property type="match status" value="1"/>
</dbReference>
<dbReference type="PIRSF" id="PIRSF002158">
    <property type="entry name" value="Ribosomal_L2"/>
    <property type="match status" value="1"/>
</dbReference>
<dbReference type="SMART" id="SM01383">
    <property type="entry name" value="Ribosomal_L2"/>
    <property type="match status" value="1"/>
</dbReference>
<dbReference type="SMART" id="SM01382">
    <property type="entry name" value="Ribosomal_L2_C"/>
    <property type="match status" value="1"/>
</dbReference>
<dbReference type="SUPFAM" id="SSF50249">
    <property type="entry name" value="Nucleic acid-binding proteins"/>
    <property type="match status" value="1"/>
</dbReference>
<dbReference type="SUPFAM" id="SSF50104">
    <property type="entry name" value="Translation proteins SH3-like domain"/>
    <property type="match status" value="1"/>
</dbReference>
<dbReference type="PROSITE" id="PS00467">
    <property type="entry name" value="RIBOSOMAL_L2"/>
    <property type="match status" value="1"/>
</dbReference>
<name>RL2_FRATO</name>
<proteinExistence type="inferred from homology"/>
<reference key="1">
    <citation type="journal article" date="2006" name="J. Bacteriol.">
        <title>Chromosome rearrangement and diversification of Francisella tularensis revealed by the type B (OSU18) genome sequence.</title>
        <authorList>
            <person name="Petrosino J.F."/>
            <person name="Xiang Q."/>
            <person name="Karpathy S.E."/>
            <person name="Jiang H."/>
            <person name="Yerrapragada S."/>
            <person name="Liu Y."/>
            <person name="Gioia J."/>
            <person name="Hemphill L."/>
            <person name="Gonzalez A."/>
            <person name="Raghavan T.M."/>
            <person name="Uzman A."/>
            <person name="Fox G.E."/>
            <person name="Highlander S."/>
            <person name="Reichard M."/>
            <person name="Morton R.J."/>
            <person name="Clinkenbeard K.D."/>
            <person name="Weinstock G.M."/>
        </authorList>
    </citation>
    <scope>NUCLEOTIDE SEQUENCE [LARGE SCALE GENOMIC DNA]</scope>
    <source>
        <strain>OSU18</strain>
    </source>
</reference>